<comment type="function">
    <text evidence="1">Together with its co-chaperonin GroES, plays an essential role in assisting protein folding. The GroEL-GroES system forms a nano-cage that allows encapsulation of the non-native substrate proteins and provides a physical environment optimized to promote and accelerate protein folding.</text>
</comment>
<comment type="catalytic activity">
    <reaction evidence="1">
        <text>ATP + H2O + a folded polypeptide = ADP + phosphate + an unfolded polypeptide.</text>
        <dbReference type="EC" id="5.6.1.7"/>
    </reaction>
</comment>
<comment type="subunit">
    <text evidence="1">Forms a cylinder of 14 subunits composed of two heptameric rings stacked back-to-back. Interacts with the co-chaperonin GroES.</text>
</comment>
<comment type="subcellular location">
    <subcellularLocation>
        <location evidence="1">Cytoplasm</location>
    </subcellularLocation>
</comment>
<comment type="similarity">
    <text evidence="1">Belongs to the chaperonin (HSP60) family.</text>
</comment>
<feature type="chain" id="PRO_1000130012" description="Chaperonin GroEL">
    <location>
        <begin position="1"/>
        <end position="548"/>
    </location>
</feature>
<feature type="binding site" evidence="1">
    <location>
        <begin position="30"/>
        <end position="33"/>
    </location>
    <ligand>
        <name>ATP</name>
        <dbReference type="ChEBI" id="CHEBI:30616"/>
    </ligand>
</feature>
<feature type="binding site" evidence="1">
    <location>
        <position position="51"/>
    </location>
    <ligand>
        <name>ATP</name>
        <dbReference type="ChEBI" id="CHEBI:30616"/>
    </ligand>
</feature>
<feature type="binding site" evidence="1">
    <location>
        <begin position="87"/>
        <end position="91"/>
    </location>
    <ligand>
        <name>ATP</name>
        <dbReference type="ChEBI" id="CHEBI:30616"/>
    </ligand>
</feature>
<feature type="binding site" evidence="1">
    <location>
        <position position="415"/>
    </location>
    <ligand>
        <name>ATP</name>
        <dbReference type="ChEBI" id="CHEBI:30616"/>
    </ligand>
</feature>
<feature type="binding site" evidence="1">
    <location>
        <begin position="479"/>
        <end position="481"/>
    </location>
    <ligand>
        <name>ATP</name>
        <dbReference type="ChEBI" id="CHEBI:30616"/>
    </ligand>
</feature>
<feature type="binding site" evidence="1">
    <location>
        <position position="495"/>
    </location>
    <ligand>
        <name>ATP</name>
        <dbReference type="ChEBI" id="CHEBI:30616"/>
    </ligand>
</feature>
<protein>
    <recommendedName>
        <fullName evidence="1">Chaperonin GroEL</fullName>
        <ecNumber evidence="1">5.6.1.7</ecNumber>
    </recommendedName>
    <alternativeName>
        <fullName evidence="1">60 kDa chaperonin</fullName>
    </alternativeName>
    <alternativeName>
        <fullName evidence="1">Chaperonin-60</fullName>
        <shortName evidence="1">Cpn60</shortName>
    </alternativeName>
</protein>
<keyword id="KW-0067">ATP-binding</keyword>
<keyword id="KW-0143">Chaperone</keyword>
<keyword id="KW-0963">Cytoplasm</keyword>
<keyword id="KW-0413">Isomerase</keyword>
<keyword id="KW-0547">Nucleotide-binding</keyword>
<organism>
    <name type="scientific">Escherichia coli (strain SE11)</name>
    <dbReference type="NCBI Taxonomy" id="409438"/>
    <lineage>
        <taxon>Bacteria</taxon>
        <taxon>Pseudomonadati</taxon>
        <taxon>Pseudomonadota</taxon>
        <taxon>Gammaproteobacteria</taxon>
        <taxon>Enterobacterales</taxon>
        <taxon>Enterobacteriaceae</taxon>
        <taxon>Escherichia</taxon>
    </lineage>
</organism>
<sequence length="548" mass="57329">MAAKDVKFGNDARVKMLRGVNVLADAVKVTLGPKGRNVVLDKSFGAPTITKDGVSVAREIELEDKFENMGAQMVKEVASKANDAAGDGTTTATVLAQAIITEGLKAVAAGMNPMDLKRGIDKAVTAAVEELKALSVPCSDSKAIAQVGTISANSDETVGKLIAEAMDKVGKEGVITVEDGTGLQDELDVVEGMQFDRGYLSPYFINKPETGAVELESPFILLADKKISNIREMLPVLEAVAKAGKPLLIIAEDVEGEALATLVVNTMRGIVKVAAVKAPGFGDRRKAMLQDIATLTGGTVISEEIGMELEKATLEDLGQAKRVVINKDTTTIIDGVGEEAAIQGRVAQIRQQIEEATSDYDREKLQERVAKLAGGVAVIKVGAATEVEMKEKKARVEDALHATRAAVEEGVVAGGGVALIRVASKLADLRGQNEDQNVGIKVALRAMEAPLRQIVLNCGEEPSVVANTVKGGDGNYGYNAATEEYGNMIDMGILDPTKVTRSALQYAASVAGLMITTECMVTDLPKNDAADLGAAGGMGGMGGMGGMM</sequence>
<proteinExistence type="inferred from homology"/>
<evidence type="ECO:0000255" key="1">
    <source>
        <dbReference type="HAMAP-Rule" id="MF_00600"/>
    </source>
</evidence>
<gene>
    <name evidence="1" type="primary">groEL</name>
    <name evidence="1" type="synonym">groL</name>
    <name type="ordered locus">ECSE_4442</name>
</gene>
<name>CH60_ECOSE</name>
<dbReference type="EC" id="5.6.1.7" evidence="1"/>
<dbReference type="EMBL" id="AP009240">
    <property type="protein sequence ID" value="BAG79966.1"/>
    <property type="molecule type" value="Genomic_DNA"/>
</dbReference>
<dbReference type="RefSeq" id="WP_000729117.1">
    <property type="nucleotide sequence ID" value="NC_011415.1"/>
</dbReference>
<dbReference type="SMR" id="B6I615"/>
<dbReference type="GeneID" id="93777681"/>
<dbReference type="KEGG" id="ecy:ECSE_4442"/>
<dbReference type="HOGENOM" id="CLU_016503_3_0_6"/>
<dbReference type="Proteomes" id="UP000008199">
    <property type="component" value="Chromosome"/>
</dbReference>
<dbReference type="GO" id="GO:0005737">
    <property type="term" value="C:cytoplasm"/>
    <property type="evidence" value="ECO:0007669"/>
    <property type="project" value="UniProtKB-SubCell"/>
</dbReference>
<dbReference type="GO" id="GO:0005524">
    <property type="term" value="F:ATP binding"/>
    <property type="evidence" value="ECO:0007669"/>
    <property type="project" value="UniProtKB-UniRule"/>
</dbReference>
<dbReference type="GO" id="GO:0140662">
    <property type="term" value="F:ATP-dependent protein folding chaperone"/>
    <property type="evidence" value="ECO:0007669"/>
    <property type="project" value="InterPro"/>
</dbReference>
<dbReference type="GO" id="GO:0016853">
    <property type="term" value="F:isomerase activity"/>
    <property type="evidence" value="ECO:0007669"/>
    <property type="project" value="UniProtKB-KW"/>
</dbReference>
<dbReference type="GO" id="GO:0051082">
    <property type="term" value="F:unfolded protein binding"/>
    <property type="evidence" value="ECO:0007669"/>
    <property type="project" value="UniProtKB-UniRule"/>
</dbReference>
<dbReference type="GO" id="GO:0042026">
    <property type="term" value="P:protein refolding"/>
    <property type="evidence" value="ECO:0007669"/>
    <property type="project" value="UniProtKB-UniRule"/>
</dbReference>
<dbReference type="CDD" id="cd03344">
    <property type="entry name" value="GroEL"/>
    <property type="match status" value="1"/>
</dbReference>
<dbReference type="FunFam" id="1.10.560.10:FF:000001">
    <property type="entry name" value="60 kDa chaperonin"/>
    <property type="match status" value="1"/>
</dbReference>
<dbReference type="FunFam" id="3.50.7.10:FF:000001">
    <property type="entry name" value="60 kDa chaperonin"/>
    <property type="match status" value="1"/>
</dbReference>
<dbReference type="Gene3D" id="3.50.7.10">
    <property type="entry name" value="GroEL"/>
    <property type="match status" value="1"/>
</dbReference>
<dbReference type="Gene3D" id="1.10.560.10">
    <property type="entry name" value="GroEL-like equatorial domain"/>
    <property type="match status" value="1"/>
</dbReference>
<dbReference type="Gene3D" id="3.30.260.10">
    <property type="entry name" value="TCP-1-like chaperonin intermediate domain"/>
    <property type="match status" value="1"/>
</dbReference>
<dbReference type="HAMAP" id="MF_00600">
    <property type="entry name" value="CH60"/>
    <property type="match status" value="1"/>
</dbReference>
<dbReference type="InterPro" id="IPR018370">
    <property type="entry name" value="Chaperonin_Cpn60_CS"/>
</dbReference>
<dbReference type="InterPro" id="IPR001844">
    <property type="entry name" value="Cpn60/GroEL"/>
</dbReference>
<dbReference type="InterPro" id="IPR002423">
    <property type="entry name" value="Cpn60/GroEL/TCP-1"/>
</dbReference>
<dbReference type="InterPro" id="IPR027409">
    <property type="entry name" value="GroEL-like_apical_dom_sf"/>
</dbReference>
<dbReference type="InterPro" id="IPR027413">
    <property type="entry name" value="GROEL-like_equatorial_sf"/>
</dbReference>
<dbReference type="InterPro" id="IPR027410">
    <property type="entry name" value="TCP-1-like_intermed_sf"/>
</dbReference>
<dbReference type="NCBIfam" id="TIGR02348">
    <property type="entry name" value="GroEL"/>
    <property type="match status" value="1"/>
</dbReference>
<dbReference type="NCBIfam" id="NF000592">
    <property type="entry name" value="PRK00013.1"/>
    <property type="match status" value="1"/>
</dbReference>
<dbReference type="NCBIfam" id="NF009487">
    <property type="entry name" value="PRK12849.1"/>
    <property type="match status" value="1"/>
</dbReference>
<dbReference type="NCBIfam" id="NF009488">
    <property type="entry name" value="PRK12850.1"/>
    <property type="match status" value="1"/>
</dbReference>
<dbReference type="NCBIfam" id="NF009489">
    <property type="entry name" value="PRK12851.1"/>
    <property type="match status" value="1"/>
</dbReference>
<dbReference type="PANTHER" id="PTHR45633">
    <property type="entry name" value="60 KDA HEAT SHOCK PROTEIN, MITOCHONDRIAL"/>
    <property type="match status" value="1"/>
</dbReference>
<dbReference type="Pfam" id="PF00118">
    <property type="entry name" value="Cpn60_TCP1"/>
    <property type="match status" value="1"/>
</dbReference>
<dbReference type="PRINTS" id="PR00298">
    <property type="entry name" value="CHAPERONIN60"/>
</dbReference>
<dbReference type="SUPFAM" id="SSF52029">
    <property type="entry name" value="GroEL apical domain-like"/>
    <property type="match status" value="1"/>
</dbReference>
<dbReference type="SUPFAM" id="SSF48592">
    <property type="entry name" value="GroEL equatorial domain-like"/>
    <property type="match status" value="1"/>
</dbReference>
<dbReference type="SUPFAM" id="SSF54849">
    <property type="entry name" value="GroEL-intermediate domain like"/>
    <property type="match status" value="1"/>
</dbReference>
<dbReference type="PROSITE" id="PS00296">
    <property type="entry name" value="CHAPERONINS_CPN60"/>
    <property type="match status" value="1"/>
</dbReference>
<accession>B6I615</accession>
<reference key="1">
    <citation type="journal article" date="2008" name="DNA Res.">
        <title>Complete genome sequence and comparative analysis of the wild-type commensal Escherichia coli strain SE11 isolated from a healthy adult.</title>
        <authorList>
            <person name="Oshima K."/>
            <person name="Toh H."/>
            <person name="Ogura Y."/>
            <person name="Sasamoto H."/>
            <person name="Morita H."/>
            <person name="Park S.-H."/>
            <person name="Ooka T."/>
            <person name="Iyoda S."/>
            <person name="Taylor T.D."/>
            <person name="Hayashi T."/>
            <person name="Itoh K."/>
            <person name="Hattori M."/>
        </authorList>
    </citation>
    <scope>NUCLEOTIDE SEQUENCE [LARGE SCALE GENOMIC DNA]</scope>
    <source>
        <strain>SE11</strain>
    </source>
</reference>